<sequence>MYNVKLEVFEGPFDLLFHLIEKNEIDLMDIPISVILDQYMEYIKTLQEMDLNVASEFIVMAATLLEIKSKMLLPKQKFEGQQLEMEEVDPREELVTKLIEYKKYKIIAQTFKEMCKIGSRFFREEPEVKYIDKKIAFNYSSEDIYKAYLKVISKNNAKEDEIEIKKDEYTVESKIKELLVKLVKKTVLWFSEFIKKSRAKGEIIVSFIAVLELVRLNKIIAEQKTTYGDILIKSFGRGEKNEQ</sequence>
<protein>
    <recommendedName>
        <fullName evidence="1">Segregation and condensation protein A</fullName>
    </recommendedName>
</protein>
<feature type="chain" id="PRO_1000187579" description="Segregation and condensation protein A">
    <location>
        <begin position="1"/>
        <end position="243"/>
    </location>
</feature>
<comment type="function">
    <text evidence="1">Participates in chromosomal partition during cell division. May act via the formation of a condensin-like complex containing Smc and ScpB that pull DNA away from mid-cell into both cell halves.</text>
</comment>
<comment type="subunit">
    <text evidence="1">Component of a cohesin-like complex composed of ScpA, ScpB and the Smc homodimer, in which ScpA and ScpB bind to the head domain of Smc. The presence of the three proteins is required for the association of the complex with DNA.</text>
</comment>
<comment type="subcellular location">
    <subcellularLocation>
        <location evidence="1">Cytoplasm</location>
    </subcellularLocation>
    <text evidence="1">Associated with two foci at the outer edges of the nucleoid region in young cells, and at four foci within both cell halves in older cells.</text>
</comment>
<comment type="similarity">
    <text evidence="1">Belongs to the ScpA family.</text>
</comment>
<dbReference type="EMBL" id="CP000923">
    <property type="protein sequence ID" value="ABY92853.1"/>
    <property type="molecule type" value="Genomic_DNA"/>
</dbReference>
<dbReference type="RefSeq" id="WP_012268718.1">
    <property type="nucleotide sequence ID" value="NC_010320.1"/>
</dbReference>
<dbReference type="SMR" id="B0K158"/>
<dbReference type="KEGG" id="tex:Teth514_1566"/>
<dbReference type="HOGENOM" id="CLU_038686_3_0_9"/>
<dbReference type="Proteomes" id="UP000002155">
    <property type="component" value="Chromosome"/>
</dbReference>
<dbReference type="GO" id="GO:0005737">
    <property type="term" value="C:cytoplasm"/>
    <property type="evidence" value="ECO:0007669"/>
    <property type="project" value="UniProtKB-SubCell"/>
</dbReference>
<dbReference type="GO" id="GO:0051301">
    <property type="term" value="P:cell division"/>
    <property type="evidence" value="ECO:0007669"/>
    <property type="project" value="UniProtKB-KW"/>
</dbReference>
<dbReference type="GO" id="GO:0007059">
    <property type="term" value="P:chromosome segregation"/>
    <property type="evidence" value="ECO:0007669"/>
    <property type="project" value="UniProtKB-UniRule"/>
</dbReference>
<dbReference type="GO" id="GO:0006260">
    <property type="term" value="P:DNA replication"/>
    <property type="evidence" value="ECO:0007669"/>
    <property type="project" value="UniProtKB-UniRule"/>
</dbReference>
<dbReference type="Gene3D" id="6.10.250.2410">
    <property type="match status" value="1"/>
</dbReference>
<dbReference type="Gene3D" id="1.10.10.580">
    <property type="entry name" value="Structural maintenance of chromosome 1. Chain E"/>
    <property type="match status" value="1"/>
</dbReference>
<dbReference type="HAMAP" id="MF_01805">
    <property type="entry name" value="ScpA"/>
    <property type="match status" value="1"/>
</dbReference>
<dbReference type="InterPro" id="IPR003768">
    <property type="entry name" value="ScpA"/>
</dbReference>
<dbReference type="InterPro" id="IPR023093">
    <property type="entry name" value="ScpA-like_C"/>
</dbReference>
<dbReference type="PANTHER" id="PTHR33969">
    <property type="entry name" value="SEGREGATION AND CONDENSATION PROTEIN A"/>
    <property type="match status" value="1"/>
</dbReference>
<dbReference type="PANTHER" id="PTHR33969:SF2">
    <property type="entry name" value="SEGREGATION AND CONDENSATION PROTEIN A"/>
    <property type="match status" value="1"/>
</dbReference>
<dbReference type="Pfam" id="PF02616">
    <property type="entry name" value="SMC_ScpA"/>
    <property type="match status" value="1"/>
</dbReference>
<accession>B0K158</accession>
<organism>
    <name type="scientific">Thermoanaerobacter sp. (strain X514)</name>
    <dbReference type="NCBI Taxonomy" id="399726"/>
    <lineage>
        <taxon>Bacteria</taxon>
        <taxon>Bacillati</taxon>
        <taxon>Bacillota</taxon>
        <taxon>Clostridia</taxon>
        <taxon>Thermoanaerobacterales</taxon>
        <taxon>Thermoanaerobacteraceae</taxon>
        <taxon>Thermoanaerobacter</taxon>
    </lineage>
</organism>
<name>SCPA_THEPX</name>
<proteinExistence type="inferred from homology"/>
<evidence type="ECO:0000255" key="1">
    <source>
        <dbReference type="HAMAP-Rule" id="MF_01805"/>
    </source>
</evidence>
<reference key="1">
    <citation type="submission" date="2008-01" db="EMBL/GenBank/DDBJ databases">
        <title>Complete sequence of Thermoanaerobacter sp. X514.</title>
        <authorList>
            <consortium name="US DOE Joint Genome Institute"/>
            <person name="Copeland A."/>
            <person name="Lucas S."/>
            <person name="Lapidus A."/>
            <person name="Barry K."/>
            <person name="Glavina del Rio T."/>
            <person name="Dalin E."/>
            <person name="Tice H."/>
            <person name="Pitluck S."/>
            <person name="Bruce D."/>
            <person name="Goodwin L."/>
            <person name="Saunders E."/>
            <person name="Brettin T."/>
            <person name="Detter J.C."/>
            <person name="Han C."/>
            <person name="Schmutz J."/>
            <person name="Larimer F."/>
            <person name="Land M."/>
            <person name="Hauser L."/>
            <person name="Kyrpides N."/>
            <person name="Kim E."/>
            <person name="Hemme C."/>
            <person name="Fields M.W."/>
            <person name="He Z."/>
            <person name="Zhou J."/>
            <person name="Richardson P."/>
        </authorList>
    </citation>
    <scope>NUCLEOTIDE SEQUENCE [LARGE SCALE GENOMIC DNA]</scope>
    <source>
        <strain>X514</strain>
    </source>
</reference>
<keyword id="KW-0131">Cell cycle</keyword>
<keyword id="KW-0132">Cell division</keyword>
<keyword id="KW-0159">Chromosome partition</keyword>
<keyword id="KW-0963">Cytoplasm</keyword>
<gene>
    <name evidence="1" type="primary">scpA</name>
    <name type="ordered locus">Teth514_1566</name>
</gene>